<gene>
    <name type="primary">gap</name>
    <name type="ordered locus">SCO1947</name>
    <name type="ORF">SCC54.07c</name>
</gene>
<keyword id="KW-0963">Cytoplasm</keyword>
<keyword id="KW-0324">Glycolysis</keyword>
<keyword id="KW-0520">NAD</keyword>
<keyword id="KW-0547">Nucleotide-binding</keyword>
<keyword id="KW-0560">Oxidoreductase</keyword>
<keyword id="KW-1185">Reference proteome</keyword>
<accession>Q9Z518</accession>
<proteinExistence type="inferred from homology"/>
<sequence>MTIRVGINGFGRIGRNYFRALLEQGADIEIVAVNDLGDTATTAHLLKYDTILGRLKAEVSHTEDTITVDGKTIKVLSERNPADIPWGELGVDIVIESTGIFTKKADAEKHIAGGAKKVLISAPAKDEDITIVMGVNQDKYDPANHHVISNASCTTNCVAPMAKVLDENFGIVKGLMTTVHAYTNDQRILDFPHKDLRRARAAAENIIPTTTGAAKATALVLPQLKGKLDGIAMRVPVPTGSATDLVVELQREVTKDEVNAAFKKAADDGDLKGILFYTEDAIVSSDITGDPASCTFDSSLTMVQEGKSVKILGWYDNEWGYSNRLVDLTVFVGNQL</sequence>
<comment type="function">
    <text evidence="3">Catalyzes the oxidative phosphorylation of glyceraldehyde 3-phosphate (G3P) to 1,3-bisphosphoglycerate (BPG) using the cofactor NAD. The first reaction step involves the formation of a hemiacetal intermediate between G3P and a cysteine residue, and this hemiacetal intermediate is then oxidized to a thioester, with concomitant reduction of NAD to NADH. The reduced NADH is then exchanged with the second NAD, and the thioester is attacked by a nucleophilic inorganic phosphate to produce BPG.</text>
</comment>
<comment type="catalytic activity">
    <reaction evidence="3">
        <text>D-glyceraldehyde 3-phosphate + phosphate + NAD(+) = (2R)-3-phospho-glyceroyl phosphate + NADH + H(+)</text>
        <dbReference type="Rhea" id="RHEA:10300"/>
        <dbReference type="ChEBI" id="CHEBI:15378"/>
        <dbReference type="ChEBI" id="CHEBI:43474"/>
        <dbReference type="ChEBI" id="CHEBI:57540"/>
        <dbReference type="ChEBI" id="CHEBI:57604"/>
        <dbReference type="ChEBI" id="CHEBI:57945"/>
        <dbReference type="ChEBI" id="CHEBI:59776"/>
        <dbReference type="EC" id="1.2.1.12"/>
    </reaction>
</comment>
<comment type="activity regulation">
    <text>Resistant to pentalenolactone.</text>
</comment>
<comment type="pathway">
    <text evidence="4">Carbohydrate degradation; glycolysis; pyruvate from D-glyceraldehyde 3-phosphate: step 1/5.</text>
</comment>
<comment type="subunit">
    <text evidence="2">Homotetramer.</text>
</comment>
<comment type="subcellular location">
    <subcellularLocation>
        <location evidence="4">Cytoplasm</location>
    </subcellularLocation>
</comment>
<comment type="similarity">
    <text evidence="4">Belongs to the glyceraldehyde-3-phosphate dehydrogenase family.</text>
</comment>
<protein>
    <recommendedName>
        <fullName evidence="3">Glyceraldehyde-3-phosphate dehydrogenase</fullName>
        <shortName evidence="3">GAPDH</shortName>
        <ecNumber evidence="3">1.2.1.12</ecNumber>
    </recommendedName>
    <alternativeName>
        <fullName evidence="3">NAD-dependent glyceraldehyde-3-phosphate dehydrogenase</fullName>
    </alternativeName>
</protein>
<name>G3P_STRCO</name>
<reference key="1">
    <citation type="journal article" date="2002" name="Nature">
        <title>Complete genome sequence of the model actinomycete Streptomyces coelicolor A3(2).</title>
        <authorList>
            <person name="Bentley S.D."/>
            <person name="Chater K.F."/>
            <person name="Cerdeno-Tarraga A.-M."/>
            <person name="Challis G.L."/>
            <person name="Thomson N.R."/>
            <person name="James K.D."/>
            <person name="Harris D.E."/>
            <person name="Quail M.A."/>
            <person name="Kieser H."/>
            <person name="Harper D."/>
            <person name="Bateman A."/>
            <person name="Brown S."/>
            <person name="Chandra G."/>
            <person name="Chen C.W."/>
            <person name="Collins M."/>
            <person name="Cronin A."/>
            <person name="Fraser A."/>
            <person name="Goble A."/>
            <person name="Hidalgo J."/>
            <person name="Hornsby T."/>
            <person name="Howarth S."/>
            <person name="Huang C.-H."/>
            <person name="Kieser T."/>
            <person name="Larke L."/>
            <person name="Murphy L.D."/>
            <person name="Oliver K."/>
            <person name="O'Neil S."/>
            <person name="Rabbinowitsch E."/>
            <person name="Rajandream M.A."/>
            <person name="Rutherford K.M."/>
            <person name="Rutter S."/>
            <person name="Seeger K."/>
            <person name="Saunders D."/>
            <person name="Sharp S."/>
            <person name="Squares R."/>
            <person name="Squares S."/>
            <person name="Taylor K."/>
            <person name="Warren T."/>
            <person name="Wietzorrek A."/>
            <person name="Woodward J.R."/>
            <person name="Barrell B.G."/>
            <person name="Parkhill J."/>
            <person name="Hopwood D.A."/>
        </authorList>
    </citation>
    <scope>NUCLEOTIDE SEQUENCE [LARGE SCALE GENOMIC DNA]</scope>
    <source>
        <strain>ATCC BAA-471 / A3(2) / M145</strain>
    </source>
</reference>
<organism>
    <name type="scientific">Streptomyces coelicolor (strain ATCC BAA-471 / A3(2) / M145)</name>
    <dbReference type="NCBI Taxonomy" id="100226"/>
    <lineage>
        <taxon>Bacteria</taxon>
        <taxon>Bacillati</taxon>
        <taxon>Actinomycetota</taxon>
        <taxon>Actinomycetes</taxon>
        <taxon>Kitasatosporales</taxon>
        <taxon>Streptomycetaceae</taxon>
        <taxon>Streptomyces</taxon>
        <taxon>Streptomyces albidoflavus group</taxon>
    </lineage>
</organism>
<evidence type="ECO:0000250" key="1">
    <source>
        <dbReference type="UniProtKB" id="P00362"/>
    </source>
</evidence>
<evidence type="ECO:0000250" key="2">
    <source>
        <dbReference type="UniProtKB" id="P54226"/>
    </source>
</evidence>
<evidence type="ECO:0000250" key="3">
    <source>
        <dbReference type="UniProtKB" id="P9WN83"/>
    </source>
</evidence>
<evidence type="ECO:0000305" key="4"/>
<dbReference type="EC" id="1.2.1.12" evidence="3"/>
<dbReference type="EMBL" id="AL939110">
    <property type="protein sequence ID" value="CAB38137.1"/>
    <property type="molecule type" value="Genomic_DNA"/>
</dbReference>
<dbReference type="PIR" id="T36020">
    <property type="entry name" value="T36020"/>
</dbReference>
<dbReference type="RefSeq" id="NP_626211.1">
    <property type="nucleotide sequence ID" value="NC_003888.3"/>
</dbReference>
<dbReference type="RefSeq" id="WP_003976871.1">
    <property type="nucleotide sequence ID" value="NZ_VNID01000001.1"/>
</dbReference>
<dbReference type="SMR" id="Q9Z518"/>
<dbReference type="FunCoup" id="Q9Z518">
    <property type="interactions" value="404"/>
</dbReference>
<dbReference type="STRING" id="100226.gene:17759544"/>
<dbReference type="PaxDb" id="100226-SCO1947"/>
<dbReference type="GeneID" id="91387060"/>
<dbReference type="KEGG" id="sco:SCO1947"/>
<dbReference type="PATRIC" id="fig|100226.15.peg.1974"/>
<dbReference type="eggNOG" id="COG0057">
    <property type="taxonomic scope" value="Bacteria"/>
</dbReference>
<dbReference type="HOGENOM" id="CLU_030140_0_2_11"/>
<dbReference type="InParanoid" id="Q9Z518"/>
<dbReference type="OrthoDB" id="9803304at2"/>
<dbReference type="PhylomeDB" id="Q9Z518"/>
<dbReference type="UniPathway" id="UPA00109">
    <property type="reaction ID" value="UER00184"/>
</dbReference>
<dbReference type="Proteomes" id="UP000001973">
    <property type="component" value="Chromosome"/>
</dbReference>
<dbReference type="GO" id="GO:0005737">
    <property type="term" value="C:cytoplasm"/>
    <property type="evidence" value="ECO:0007669"/>
    <property type="project" value="UniProtKB-SubCell"/>
</dbReference>
<dbReference type="GO" id="GO:0004365">
    <property type="term" value="F:glyceraldehyde-3-phosphate dehydrogenase (NAD+) (phosphorylating) activity"/>
    <property type="evidence" value="ECO:0000250"/>
    <property type="project" value="UniProtKB"/>
</dbReference>
<dbReference type="GO" id="GO:0051287">
    <property type="term" value="F:NAD binding"/>
    <property type="evidence" value="ECO:0000250"/>
    <property type="project" value="UniProtKB"/>
</dbReference>
<dbReference type="GO" id="GO:0050661">
    <property type="term" value="F:NADP binding"/>
    <property type="evidence" value="ECO:0007669"/>
    <property type="project" value="InterPro"/>
</dbReference>
<dbReference type="GO" id="GO:0006006">
    <property type="term" value="P:glucose metabolic process"/>
    <property type="evidence" value="ECO:0000318"/>
    <property type="project" value="GO_Central"/>
</dbReference>
<dbReference type="GO" id="GO:0006096">
    <property type="term" value="P:glycolytic process"/>
    <property type="evidence" value="ECO:0007669"/>
    <property type="project" value="UniProtKB-UniPathway"/>
</dbReference>
<dbReference type="CDD" id="cd18126">
    <property type="entry name" value="GAPDH_I_C"/>
    <property type="match status" value="1"/>
</dbReference>
<dbReference type="CDD" id="cd05214">
    <property type="entry name" value="GAPDH_I_N"/>
    <property type="match status" value="1"/>
</dbReference>
<dbReference type="FunFam" id="3.30.360.10:FF:000002">
    <property type="entry name" value="Glyceraldehyde-3-phosphate dehydrogenase"/>
    <property type="match status" value="1"/>
</dbReference>
<dbReference type="FunFam" id="3.40.50.720:FF:000001">
    <property type="entry name" value="Glyceraldehyde-3-phosphate dehydrogenase"/>
    <property type="match status" value="1"/>
</dbReference>
<dbReference type="Gene3D" id="3.30.360.10">
    <property type="entry name" value="Dihydrodipicolinate Reductase, domain 2"/>
    <property type="match status" value="1"/>
</dbReference>
<dbReference type="Gene3D" id="3.40.50.720">
    <property type="entry name" value="NAD(P)-binding Rossmann-like Domain"/>
    <property type="match status" value="1"/>
</dbReference>
<dbReference type="InterPro" id="IPR020831">
    <property type="entry name" value="GlycerAld/Erythrose_P_DH"/>
</dbReference>
<dbReference type="InterPro" id="IPR020829">
    <property type="entry name" value="GlycerAld_3-P_DH_cat"/>
</dbReference>
<dbReference type="InterPro" id="IPR020828">
    <property type="entry name" value="GlycerAld_3-P_DH_NAD(P)-bd"/>
</dbReference>
<dbReference type="InterPro" id="IPR006424">
    <property type="entry name" value="Glyceraldehyde-3-P_DH_1"/>
</dbReference>
<dbReference type="InterPro" id="IPR036291">
    <property type="entry name" value="NAD(P)-bd_dom_sf"/>
</dbReference>
<dbReference type="NCBIfam" id="TIGR01534">
    <property type="entry name" value="GAPDH-I"/>
    <property type="match status" value="1"/>
</dbReference>
<dbReference type="PANTHER" id="PTHR43148">
    <property type="entry name" value="GLYCERALDEHYDE-3-PHOSPHATE DEHYDROGENASE 2"/>
    <property type="match status" value="1"/>
</dbReference>
<dbReference type="Pfam" id="PF02800">
    <property type="entry name" value="Gp_dh_C"/>
    <property type="match status" value="1"/>
</dbReference>
<dbReference type="Pfam" id="PF00044">
    <property type="entry name" value="Gp_dh_N"/>
    <property type="match status" value="1"/>
</dbReference>
<dbReference type="PIRSF" id="PIRSF000149">
    <property type="entry name" value="GAP_DH"/>
    <property type="match status" value="1"/>
</dbReference>
<dbReference type="PRINTS" id="PR00078">
    <property type="entry name" value="G3PDHDRGNASE"/>
</dbReference>
<dbReference type="SMART" id="SM00846">
    <property type="entry name" value="Gp_dh_N"/>
    <property type="match status" value="1"/>
</dbReference>
<dbReference type="SUPFAM" id="SSF55347">
    <property type="entry name" value="Glyceraldehyde-3-phosphate dehydrogenase-like, C-terminal domain"/>
    <property type="match status" value="1"/>
</dbReference>
<dbReference type="SUPFAM" id="SSF51735">
    <property type="entry name" value="NAD(P)-binding Rossmann-fold domains"/>
    <property type="match status" value="1"/>
</dbReference>
<feature type="chain" id="PRO_0000145701" description="Glyceraldehyde-3-phosphate dehydrogenase">
    <location>
        <begin position="1"/>
        <end position="336"/>
    </location>
</feature>
<feature type="active site" description="Nucleophile" evidence="1">
    <location>
        <position position="153"/>
    </location>
</feature>
<feature type="binding site" evidence="1">
    <location>
        <begin position="12"/>
        <end position="13"/>
    </location>
    <ligand>
        <name>NAD(+)</name>
        <dbReference type="ChEBI" id="CHEBI:57540"/>
    </ligand>
</feature>
<feature type="binding site" evidence="1">
    <location>
        <position position="35"/>
    </location>
    <ligand>
        <name>NAD(+)</name>
        <dbReference type="ChEBI" id="CHEBI:57540"/>
    </ligand>
</feature>
<feature type="binding site" evidence="1">
    <location>
        <position position="79"/>
    </location>
    <ligand>
        <name>NAD(+)</name>
        <dbReference type="ChEBI" id="CHEBI:57540"/>
    </ligand>
</feature>
<feature type="binding site" evidence="1">
    <location>
        <position position="121"/>
    </location>
    <ligand>
        <name>NAD(+)</name>
        <dbReference type="ChEBI" id="CHEBI:57540"/>
    </ligand>
</feature>
<feature type="binding site" evidence="1">
    <location>
        <begin position="152"/>
        <end position="154"/>
    </location>
    <ligand>
        <name>D-glyceraldehyde 3-phosphate</name>
        <dbReference type="ChEBI" id="CHEBI:59776"/>
    </ligand>
</feature>
<feature type="binding site" evidence="1">
    <location>
        <position position="183"/>
    </location>
    <ligand>
        <name>D-glyceraldehyde 3-phosphate</name>
        <dbReference type="ChEBI" id="CHEBI:59776"/>
    </ligand>
</feature>
<feature type="binding site" evidence="1">
    <location>
        <position position="184"/>
    </location>
    <ligand>
        <name>NAD(+)</name>
        <dbReference type="ChEBI" id="CHEBI:57540"/>
    </ligand>
</feature>
<feature type="binding site" evidence="1">
    <location>
        <position position="198"/>
    </location>
    <ligand>
        <name>D-glyceraldehyde 3-phosphate</name>
        <dbReference type="ChEBI" id="CHEBI:59776"/>
    </ligand>
</feature>
<feature type="binding site" evidence="1">
    <location>
        <begin position="211"/>
        <end position="212"/>
    </location>
    <ligand>
        <name>D-glyceraldehyde 3-phosphate</name>
        <dbReference type="ChEBI" id="CHEBI:59776"/>
    </ligand>
</feature>
<feature type="binding site" evidence="1">
    <location>
        <position position="234"/>
    </location>
    <ligand>
        <name>D-glyceraldehyde 3-phosphate</name>
        <dbReference type="ChEBI" id="CHEBI:59776"/>
    </ligand>
</feature>
<feature type="binding site" evidence="1">
    <location>
        <position position="317"/>
    </location>
    <ligand>
        <name>NAD(+)</name>
        <dbReference type="ChEBI" id="CHEBI:57540"/>
    </ligand>
</feature>
<feature type="site" description="Activates thiol group during catalysis" evidence="1">
    <location>
        <position position="180"/>
    </location>
</feature>